<name>UCHL5_BOVIN</name>
<accession>Q9XSJ0</accession>
<accession>Q3MHN9</accession>
<dbReference type="EC" id="3.4.19.12"/>
<dbReference type="EMBL" id="AF148446">
    <property type="protein sequence ID" value="AAD31533.1"/>
    <property type="molecule type" value="mRNA"/>
</dbReference>
<dbReference type="EMBL" id="BC105166">
    <property type="protein sequence ID" value="AAI05167.1"/>
    <property type="molecule type" value="mRNA"/>
</dbReference>
<dbReference type="RefSeq" id="NP_776906.2">
    <property type="nucleotide sequence ID" value="NM_174481.3"/>
</dbReference>
<dbReference type="SMR" id="Q9XSJ0"/>
<dbReference type="FunCoup" id="Q9XSJ0">
    <property type="interactions" value="4320"/>
</dbReference>
<dbReference type="STRING" id="9913.ENSBTAP00000018104"/>
<dbReference type="MEROPS" id="C12.005"/>
<dbReference type="PaxDb" id="9913-ENSBTAP00000018104"/>
<dbReference type="GeneID" id="282110"/>
<dbReference type="KEGG" id="bta:282110"/>
<dbReference type="CTD" id="51377"/>
<dbReference type="VEuPathDB" id="HostDB:ENSBTAG00000013620"/>
<dbReference type="eggNOG" id="KOG2778">
    <property type="taxonomic scope" value="Eukaryota"/>
</dbReference>
<dbReference type="HOGENOM" id="CLU_018316_0_0_1"/>
<dbReference type="InParanoid" id="Q9XSJ0"/>
<dbReference type="OMA" id="YIQYEIQ"/>
<dbReference type="OrthoDB" id="1924260at2759"/>
<dbReference type="TreeFam" id="TF313976"/>
<dbReference type="BRENDA" id="3.4.19.12">
    <property type="organism ID" value="908"/>
</dbReference>
<dbReference type="Reactome" id="R-BTA-5689603">
    <property type="pathway name" value="UCH proteinases"/>
</dbReference>
<dbReference type="Proteomes" id="UP000009136">
    <property type="component" value="Chromosome 16"/>
</dbReference>
<dbReference type="Bgee" id="ENSBTAG00000013620">
    <property type="expression patterns" value="Expressed in saliva-secreting gland and 106 other cell types or tissues"/>
</dbReference>
<dbReference type="GO" id="GO:0005737">
    <property type="term" value="C:cytoplasm"/>
    <property type="evidence" value="ECO:0000318"/>
    <property type="project" value="GO_Central"/>
</dbReference>
<dbReference type="GO" id="GO:0005829">
    <property type="term" value="C:cytosol"/>
    <property type="evidence" value="ECO:0000250"/>
    <property type="project" value="UniProtKB"/>
</dbReference>
<dbReference type="GO" id="GO:0031011">
    <property type="term" value="C:Ino80 complex"/>
    <property type="evidence" value="ECO:0007669"/>
    <property type="project" value="Ensembl"/>
</dbReference>
<dbReference type="GO" id="GO:0005730">
    <property type="term" value="C:nucleolus"/>
    <property type="evidence" value="ECO:0007669"/>
    <property type="project" value="Ensembl"/>
</dbReference>
<dbReference type="GO" id="GO:0005654">
    <property type="term" value="C:nucleoplasm"/>
    <property type="evidence" value="ECO:0007669"/>
    <property type="project" value="Ensembl"/>
</dbReference>
<dbReference type="GO" id="GO:0005634">
    <property type="term" value="C:nucleus"/>
    <property type="evidence" value="ECO:0000250"/>
    <property type="project" value="UniProtKB"/>
</dbReference>
<dbReference type="GO" id="GO:0000502">
    <property type="term" value="C:proteasome complex"/>
    <property type="evidence" value="ECO:0007669"/>
    <property type="project" value="UniProtKB-KW"/>
</dbReference>
<dbReference type="GO" id="GO:0004843">
    <property type="term" value="F:cysteine-type deubiquitinase activity"/>
    <property type="evidence" value="ECO:0000314"/>
    <property type="project" value="UniProtKB"/>
</dbReference>
<dbReference type="GO" id="GO:0004866">
    <property type="term" value="F:endopeptidase inhibitor activity"/>
    <property type="evidence" value="ECO:0007669"/>
    <property type="project" value="Ensembl"/>
</dbReference>
<dbReference type="GO" id="GO:0070628">
    <property type="term" value="F:proteasome binding"/>
    <property type="evidence" value="ECO:0000314"/>
    <property type="project" value="UniProtKB"/>
</dbReference>
<dbReference type="GO" id="GO:0006338">
    <property type="term" value="P:chromatin remodeling"/>
    <property type="evidence" value="ECO:0007669"/>
    <property type="project" value="Ensembl"/>
</dbReference>
<dbReference type="GO" id="GO:0006310">
    <property type="term" value="P:DNA recombination"/>
    <property type="evidence" value="ECO:0007669"/>
    <property type="project" value="UniProtKB-KW"/>
</dbReference>
<dbReference type="GO" id="GO:0006281">
    <property type="term" value="P:DNA repair"/>
    <property type="evidence" value="ECO:0007669"/>
    <property type="project" value="UniProtKB-KW"/>
</dbReference>
<dbReference type="GO" id="GO:0048853">
    <property type="term" value="P:forebrain morphogenesis"/>
    <property type="evidence" value="ECO:0007669"/>
    <property type="project" value="Ensembl"/>
</dbReference>
<dbReference type="GO" id="GO:0021670">
    <property type="term" value="P:lateral ventricle development"/>
    <property type="evidence" value="ECO:0007669"/>
    <property type="project" value="Ensembl"/>
</dbReference>
<dbReference type="GO" id="GO:0030901">
    <property type="term" value="P:midbrain development"/>
    <property type="evidence" value="ECO:0007669"/>
    <property type="project" value="Ensembl"/>
</dbReference>
<dbReference type="GO" id="GO:0032435">
    <property type="term" value="P:negative regulation of proteasomal ubiquitin-dependent protein catabolic process"/>
    <property type="evidence" value="ECO:0007669"/>
    <property type="project" value="Ensembl"/>
</dbReference>
<dbReference type="GO" id="GO:0045739">
    <property type="term" value="P:positive regulation of DNA repair"/>
    <property type="evidence" value="ECO:0007669"/>
    <property type="project" value="Ensembl"/>
</dbReference>
<dbReference type="GO" id="GO:0045893">
    <property type="term" value="P:positive regulation of DNA-templated transcription"/>
    <property type="evidence" value="ECO:0007669"/>
    <property type="project" value="Ensembl"/>
</dbReference>
<dbReference type="GO" id="GO:0045880">
    <property type="term" value="P:positive regulation of smoothened signaling pathway"/>
    <property type="evidence" value="ECO:0007669"/>
    <property type="project" value="Ensembl"/>
</dbReference>
<dbReference type="GO" id="GO:1904507">
    <property type="term" value="P:positive regulation of telomere maintenance in response to DNA damage"/>
    <property type="evidence" value="ECO:0007669"/>
    <property type="project" value="Ensembl"/>
</dbReference>
<dbReference type="GO" id="GO:0016579">
    <property type="term" value="P:protein deubiquitination"/>
    <property type="evidence" value="ECO:0000250"/>
    <property type="project" value="UniProtKB"/>
</dbReference>
<dbReference type="GO" id="GO:0051726">
    <property type="term" value="P:regulation of cell cycle"/>
    <property type="evidence" value="ECO:0007669"/>
    <property type="project" value="Ensembl"/>
</dbReference>
<dbReference type="GO" id="GO:0033044">
    <property type="term" value="P:regulation of chromosome organization"/>
    <property type="evidence" value="ECO:0000318"/>
    <property type="project" value="GO_Central"/>
</dbReference>
<dbReference type="GO" id="GO:0006275">
    <property type="term" value="P:regulation of DNA replication"/>
    <property type="evidence" value="ECO:0007669"/>
    <property type="project" value="Ensembl"/>
</dbReference>
<dbReference type="GO" id="GO:0060382">
    <property type="term" value="P:regulation of DNA strand elongation"/>
    <property type="evidence" value="ECO:0007669"/>
    <property type="project" value="Ensembl"/>
</dbReference>
<dbReference type="GO" id="GO:0045995">
    <property type="term" value="P:regulation of embryonic development"/>
    <property type="evidence" value="ECO:0007669"/>
    <property type="project" value="Ensembl"/>
</dbReference>
<dbReference type="GO" id="GO:0000723">
    <property type="term" value="P:telomere maintenance"/>
    <property type="evidence" value="ECO:0007669"/>
    <property type="project" value="Ensembl"/>
</dbReference>
<dbReference type="GO" id="GO:0006511">
    <property type="term" value="P:ubiquitin-dependent protein catabolic process"/>
    <property type="evidence" value="ECO:0007669"/>
    <property type="project" value="InterPro"/>
</dbReference>
<dbReference type="CDD" id="cd02255">
    <property type="entry name" value="Peptidase_C12"/>
    <property type="match status" value="1"/>
</dbReference>
<dbReference type="FunFam" id="3.40.532.10:FF:000001">
    <property type="entry name" value="Ubiquitin carboxyl-terminal hydrolase"/>
    <property type="match status" value="1"/>
</dbReference>
<dbReference type="FunFam" id="1.20.58.860:FF:000009">
    <property type="entry name" value="Ubiquitin carboxyl-terminal hydrolase isozyme L5"/>
    <property type="match status" value="1"/>
</dbReference>
<dbReference type="Gene3D" id="1.20.58.860">
    <property type="match status" value="1"/>
</dbReference>
<dbReference type="Gene3D" id="3.40.532.10">
    <property type="entry name" value="Peptidase C12, ubiquitin carboxyl-terminal hydrolase"/>
    <property type="match status" value="1"/>
</dbReference>
<dbReference type="InterPro" id="IPR038765">
    <property type="entry name" value="Papain-like_cys_pep_sf"/>
</dbReference>
<dbReference type="InterPro" id="IPR001578">
    <property type="entry name" value="Peptidase_C12_UCH"/>
</dbReference>
<dbReference type="InterPro" id="IPR036959">
    <property type="entry name" value="Peptidase_C12_UCH_sf"/>
</dbReference>
<dbReference type="InterPro" id="IPR017390">
    <property type="entry name" value="Ubiquitinyl_hydrolase_UCH37"/>
</dbReference>
<dbReference type="InterPro" id="IPR033837">
    <property type="entry name" value="UCH37"/>
</dbReference>
<dbReference type="InterPro" id="IPR041507">
    <property type="entry name" value="UCH_C"/>
</dbReference>
<dbReference type="PANTHER" id="PTHR10589">
    <property type="entry name" value="UBIQUITIN CARBOXYL-TERMINAL HYDROLASE"/>
    <property type="match status" value="1"/>
</dbReference>
<dbReference type="PANTHER" id="PTHR10589:SF16">
    <property type="entry name" value="UBIQUITIN CARBOXYL-TERMINAL HYDROLASE ISOZYME L5"/>
    <property type="match status" value="1"/>
</dbReference>
<dbReference type="Pfam" id="PF01088">
    <property type="entry name" value="Peptidase_C12"/>
    <property type="match status" value="1"/>
</dbReference>
<dbReference type="Pfam" id="PF18031">
    <property type="entry name" value="UCH_C"/>
    <property type="match status" value="1"/>
</dbReference>
<dbReference type="PIRSF" id="PIRSF038120">
    <property type="entry name" value="Ubiquitinyl_hydrolase_UCH37"/>
    <property type="match status" value="1"/>
</dbReference>
<dbReference type="PRINTS" id="PR00707">
    <property type="entry name" value="UBCTHYDRLASE"/>
</dbReference>
<dbReference type="SUPFAM" id="SSF54001">
    <property type="entry name" value="Cysteine proteinases"/>
    <property type="match status" value="1"/>
</dbReference>
<dbReference type="PROSITE" id="PS52048">
    <property type="entry name" value="UCH_DOMAIN"/>
    <property type="match status" value="1"/>
</dbReference>
<dbReference type="PROSITE" id="PS52049">
    <property type="entry name" value="ULD"/>
    <property type="match status" value="1"/>
</dbReference>
<proteinExistence type="evidence at transcript level"/>
<sequence>MTGNAGEWCLMESDPGVFTELIKGFGCRGAQVEEIWSLEPENFEKLKPVHGLIFLFKWQPGEEPAGSVVQDSRLDTIFFAKQVINNACATQAIVSVLLNCTHQDVHLGETLSEFKEFSQSFDAAMKGLALSNSDVIRQVHNSFARQQMFEFDAKTAAKEEDAFHFVSYVPVNGRLYELDGLREGPIDLGACNQDDWISAVRPVIEKRIQKYSEGEIRFNLMAIVSDRKMIYEQKIAELQRQLAEEPMDTDQGSNMLSAIQSEVAKNQMLIEEEVQKLKRYKIENIRRKHNYLPFIMELLKTLAEHQQLIPLVEKAKEKQNAKKAQETK</sequence>
<evidence type="ECO:0000250" key="1"/>
<evidence type="ECO:0000250" key="2">
    <source>
        <dbReference type="UniProtKB" id="Q9WUP7"/>
    </source>
</evidence>
<evidence type="ECO:0000250" key="3">
    <source>
        <dbReference type="UniProtKB" id="Q9Y5K5"/>
    </source>
</evidence>
<evidence type="ECO:0000255" key="4">
    <source>
        <dbReference type="PROSITE-ProRule" id="PRU01393"/>
    </source>
</evidence>
<evidence type="ECO:0000255" key="5">
    <source>
        <dbReference type="PROSITE-ProRule" id="PRU01394"/>
    </source>
</evidence>
<evidence type="ECO:0000305" key="6"/>
<organism>
    <name type="scientific">Bos taurus</name>
    <name type="common">Bovine</name>
    <dbReference type="NCBI Taxonomy" id="9913"/>
    <lineage>
        <taxon>Eukaryota</taxon>
        <taxon>Metazoa</taxon>
        <taxon>Chordata</taxon>
        <taxon>Craniata</taxon>
        <taxon>Vertebrata</taxon>
        <taxon>Euteleostomi</taxon>
        <taxon>Mammalia</taxon>
        <taxon>Eutheria</taxon>
        <taxon>Laurasiatheria</taxon>
        <taxon>Artiodactyla</taxon>
        <taxon>Ruminantia</taxon>
        <taxon>Pecora</taxon>
        <taxon>Bovidae</taxon>
        <taxon>Bovinae</taxon>
        <taxon>Bos</taxon>
    </lineage>
</organism>
<comment type="function">
    <text evidence="1">Protease that specifically cleaves 'Lys-48'-linked polyubiquitin chains. Deubiquitinating enzyme associated with the 19S regulatory subunit of the 26S proteasome. Putative regulatory component of the INO80 complex; however is inactive in the INO80 complex and is activated by a transient interaction of the INO80 complex with the proteasome via ADRM1 (By similarity).</text>
</comment>
<comment type="catalytic activity">
    <reaction>
        <text>Thiol-dependent hydrolysis of ester, thioester, amide, peptide and isopeptide bonds formed by the C-terminal Gly of ubiquitin (a 76-residue protein attached to proteins as an intracellular targeting signal).</text>
        <dbReference type="EC" id="3.4.19.12"/>
    </reaction>
</comment>
<comment type="activity regulation">
    <text evidence="1">Activated by ADRM1. Inhibited by interaction with NFRKB (By similarity).</text>
</comment>
<comment type="subunit">
    <text evidence="1">Component of the 19S (PA700) regulatory complex of the 26S proteasome. Interacts with ADRM1 and NFRKB. Component of the INO80 complex; specifically part of a complex module associated with N-terminus of INO80 (By similarity).</text>
</comment>
<comment type="subcellular location">
    <subcellularLocation>
        <location evidence="1">Cytoplasm</location>
    </subcellularLocation>
    <subcellularLocation>
        <location evidence="1">Nucleus</location>
    </subcellularLocation>
    <text evidence="1">Associates with the proteasome 19S subunit in the cytoplasm. Associates with the INO80 complex in the nucleus (By similarity).</text>
</comment>
<comment type="similarity">
    <text evidence="6">Belongs to the peptidase C12 family.</text>
</comment>
<feature type="chain" id="PRO_0000211065" description="Ubiquitin carboxyl-terminal hydrolase isozyme L5">
    <location>
        <begin position="1"/>
        <end position="328"/>
    </location>
</feature>
<feature type="domain" description="UCH catalytic" evidence="4">
    <location>
        <begin position="7"/>
        <end position="225"/>
    </location>
</feature>
<feature type="domain" description="ULD" evidence="5">
    <location>
        <begin position="290"/>
        <end position="318"/>
    </location>
</feature>
<feature type="region of interest" description="Interaction with ADRM1" evidence="1">
    <location>
        <begin position="312"/>
        <end position="328"/>
    </location>
</feature>
<feature type="active site" description="Nucleophile" evidence="4">
    <location>
        <position position="88"/>
    </location>
</feature>
<feature type="active site" description="Proton donor" evidence="4">
    <location>
        <position position="164"/>
    </location>
</feature>
<feature type="site" description="Transition state stabilizer" evidence="4">
    <location>
        <position position="82"/>
    </location>
</feature>
<feature type="site" description="Important for enzyme activity" evidence="4">
    <location>
        <position position="179"/>
    </location>
</feature>
<feature type="modified residue" description="N6-succinyllysine" evidence="2">
    <location>
        <position position="47"/>
    </location>
</feature>
<feature type="modified residue" description="N6-acetyllysine" evidence="3">
    <location>
        <position position="158"/>
    </location>
</feature>
<feature type="modified residue" description="N6-succinyllysine" evidence="2">
    <location>
        <position position="288"/>
    </location>
</feature>
<feature type="sequence conflict" description="In Ref. 2; AAI05167." evidence="6" ref="2">
    <original>Q</original>
    <variation>K</variation>
    <location>
        <position position="306"/>
    </location>
</feature>
<reference key="1">
    <citation type="journal article" date="2006" name="Nat. Cell Biol.">
        <title>Proteasome recruitment and activation of the Uch37 deubiquitinating enzyme by Adrm1.</title>
        <authorList>
            <person name="Yao T."/>
            <person name="Song L."/>
            <person name="Xu W."/>
            <person name="DeMartino G.N."/>
            <person name="Florens L."/>
            <person name="Swanson S.K."/>
            <person name="Washburn M.P."/>
            <person name="Conaway R.C."/>
            <person name="Conaway J.W."/>
            <person name="Cohen R.E."/>
        </authorList>
    </citation>
    <scope>NUCLEOTIDE SEQUENCE [MRNA]</scope>
</reference>
<reference key="2">
    <citation type="submission" date="2005-09" db="EMBL/GenBank/DDBJ databases">
        <authorList>
            <consortium name="NIH - Mammalian Gene Collection (MGC) project"/>
        </authorList>
    </citation>
    <scope>NUCLEOTIDE SEQUENCE [LARGE SCALE MRNA]</scope>
    <source>
        <strain>Crossbred X Angus</strain>
        <tissue>Liver</tissue>
    </source>
</reference>
<protein>
    <recommendedName>
        <fullName>Ubiquitin carboxyl-terminal hydrolase isozyme L5</fullName>
        <shortName>UCH-L5</shortName>
        <ecNumber>3.4.19.12</ecNumber>
    </recommendedName>
    <alternativeName>
        <fullName>Ubiquitin C-terminal hydrolase UCH37</fullName>
    </alternativeName>
    <alternativeName>
        <fullName>Ubiquitin thioesterase L5</fullName>
    </alternativeName>
</protein>
<keyword id="KW-0007">Acetylation</keyword>
<keyword id="KW-0963">Cytoplasm</keyword>
<keyword id="KW-0227">DNA damage</keyword>
<keyword id="KW-0233">DNA recombination</keyword>
<keyword id="KW-0234">DNA repair</keyword>
<keyword id="KW-0378">Hydrolase</keyword>
<keyword id="KW-0539">Nucleus</keyword>
<keyword id="KW-0645">Protease</keyword>
<keyword id="KW-0647">Proteasome</keyword>
<keyword id="KW-1185">Reference proteome</keyword>
<keyword id="KW-0788">Thiol protease</keyword>
<keyword id="KW-0804">Transcription</keyword>
<keyword id="KW-0805">Transcription regulation</keyword>
<keyword id="KW-0833">Ubl conjugation pathway</keyword>
<gene>
    <name type="primary">UCHL5</name>
    <name type="synonym">UCH37</name>
</gene>